<evidence type="ECO:0000255" key="1">
    <source>
        <dbReference type="HAMAP-Rule" id="MF_03061"/>
    </source>
</evidence>
<evidence type="ECO:0000305" key="2"/>
<sequence>MRCPSLARLPHRAISGLTRLPVRLQSQTFLYQRCASTAALRSPTAGPAYQSILNRHNLQRRNASAAAAAVLEAAASNPDALTQEAIIDNLDPVEATRLSRIRNIGIAAHIDSGKTTCTERILFYTGRIKAIHEVRGRDNVGAKMDSMDLEREKGITIQSAATFCDWVKKEDDGREEKYHINLIDTPGHIDFTIEVERALRVLDGAVMILCAVSGVQSQTITVDRQMRRYNVPRISFINKMDRMGANPFKAVDQINSKLKIPAAAVQVPIGAEDEFEGVVDLIRMKSIYNHGPSGEEIVIKDEIPEKVKSVVEERRRMLIETLADVDDEIAELFLDEKEPTQEQLKAAIRRATVGLKFTPVFMGTALSNKSVQPMLDGVIDYLPNPSEIENLALDQKRNEASVKLVPYNSQPFVGLAFKLEESNFGQLTYIRVYQGTLRKGANVFNARNNKKVKIPRIVRMHSNEMEEVSEIGAGEICAVFGVDCASGDSFTDGQLGYTMTSMFVPEPVISLSIKPKNNKDSANFSKAMARFQREDPTFRVTYDAESEQTLISGMGELHLDIYIERMRREYRVDCETGPPQVAYRETIGNKVEFDHLLKKQSGGPGDYARVVGWMEPTDKLEENKFEEQIVGGSISEKFLFACEKGFNLACEKGPLIGHKVLGTRMVINDGATHMTDSSEMSFKNATQQAFRKAFMESNPSVLEPMMKTVVTAPSEFQGDVISLLNKRNATINDTETGVDEFTVYADCSLNGMFGFSSHLRAATQGKGEYTMEFSHYEKAQPQLQKELIQKYLKAQADRHKK</sequence>
<dbReference type="EMBL" id="DS027054">
    <property type="protein sequence ID" value="EAW10278.1"/>
    <property type="molecule type" value="Genomic_DNA"/>
</dbReference>
<dbReference type="RefSeq" id="XP_001271704.1">
    <property type="nucleotide sequence ID" value="XM_001271703.1"/>
</dbReference>
<dbReference type="SMR" id="A1CHC3"/>
<dbReference type="STRING" id="344612.A1CHC3"/>
<dbReference type="EnsemblFungi" id="EAW10278">
    <property type="protein sequence ID" value="EAW10278"/>
    <property type="gene ID" value="ACLA_047470"/>
</dbReference>
<dbReference type="GeneID" id="4704201"/>
<dbReference type="KEGG" id="act:ACLA_047470"/>
<dbReference type="VEuPathDB" id="FungiDB:ACLA_047470"/>
<dbReference type="eggNOG" id="KOG0465">
    <property type="taxonomic scope" value="Eukaryota"/>
</dbReference>
<dbReference type="HOGENOM" id="CLU_002794_4_1_1"/>
<dbReference type="OMA" id="GQFAKVQ"/>
<dbReference type="OrthoDB" id="198619at2759"/>
<dbReference type="UniPathway" id="UPA00345"/>
<dbReference type="Proteomes" id="UP000006701">
    <property type="component" value="Unassembled WGS sequence"/>
</dbReference>
<dbReference type="GO" id="GO:0005739">
    <property type="term" value="C:mitochondrion"/>
    <property type="evidence" value="ECO:0007669"/>
    <property type="project" value="UniProtKB-SubCell"/>
</dbReference>
<dbReference type="GO" id="GO:0005525">
    <property type="term" value="F:GTP binding"/>
    <property type="evidence" value="ECO:0007669"/>
    <property type="project" value="UniProtKB-UniRule"/>
</dbReference>
<dbReference type="GO" id="GO:0003924">
    <property type="term" value="F:GTPase activity"/>
    <property type="evidence" value="ECO:0007669"/>
    <property type="project" value="UniProtKB-UniRule"/>
</dbReference>
<dbReference type="GO" id="GO:0003746">
    <property type="term" value="F:translation elongation factor activity"/>
    <property type="evidence" value="ECO:0007669"/>
    <property type="project" value="UniProtKB-UniRule"/>
</dbReference>
<dbReference type="GO" id="GO:0070125">
    <property type="term" value="P:mitochondrial translational elongation"/>
    <property type="evidence" value="ECO:0007669"/>
    <property type="project" value="UniProtKB-UniRule"/>
</dbReference>
<dbReference type="CDD" id="cd01886">
    <property type="entry name" value="EF-G"/>
    <property type="match status" value="1"/>
</dbReference>
<dbReference type="CDD" id="cd16262">
    <property type="entry name" value="EFG_III"/>
    <property type="match status" value="1"/>
</dbReference>
<dbReference type="CDD" id="cd01434">
    <property type="entry name" value="EFG_mtEFG1_IV"/>
    <property type="match status" value="1"/>
</dbReference>
<dbReference type="CDD" id="cd04091">
    <property type="entry name" value="mtEFG1_II_like"/>
    <property type="match status" value="1"/>
</dbReference>
<dbReference type="FunFam" id="3.30.230.10:FF:000003">
    <property type="entry name" value="Elongation factor G"/>
    <property type="match status" value="1"/>
</dbReference>
<dbReference type="FunFam" id="3.30.70.870:FF:000001">
    <property type="entry name" value="Elongation factor G"/>
    <property type="match status" value="1"/>
</dbReference>
<dbReference type="FunFam" id="2.40.30.10:FF:000022">
    <property type="entry name" value="Elongation factor G, mitochondrial"/>
    <property type="match status" value="1"/>
</dbReference>
<dbReference type="FunFam" id="3.30.70.240:FF:000015">
    <property type="entry name" value="Elongation factor G, mitochondrial"/>
    <property type="match status" value="1"/>
</dbReference>
<dbReference type="FunFam" id="3.40.50.300:FF:000558">
    <property type="entry name" value="Elongation factor G, mitochondrial"/>
    <property type="match status" value="1"/>
</dbReference>
<dbReference type="Gene3D" id="3.30.230.10">
    <property type="match status" value="1"/>
</dbReference>
<dbReference type="Gene3D" id="3.30.70.240">
    <property type="match status" value="1"/>
</dbReference>
<dbReference type="Gene3D" id="3.30.70.870">
    <property type="entry name" value="Elongation Factor G (Translational Gtpase), domain 3"/>
    <property type="match status" value="1"/>
</dbReference>
<dbReference type="Gene3D" id="3.40.50.300">
    <property type="entry name" value="P-loop containing nucleotide triphosphate hydrolases"/>
    <property type="match status" value="1"/>
</dbReference>
<dbReference type="Gene3D" id="2.40.30.10">
    <property type="entry name" value="Translation factors"/>
    <property type="match status" value="1"/>
</dbReference>
<dbReference type="HAMAP" id="MF_00054_B">
    <property type="entry name" value="EF_G_EF_2_B"/>
    <property type="match status" value="1"/>
</dbReference>
<dbReference type="InterPro" id="IPR041095">
    <property type="entry name" value="EFG_II"/>
</dbReference>
<dbReference type="InterPro" id="IPR009022">
    <property type="entry name" value="EFG_III"/>
</dbReference>
<dbReference type="InterPro" id="IPR035647">
    <property type="entry name" value="EFG_III/V"/>
</dbReference>
<dbReference type="InterPro" id="IPR047872">
    <property type="entry name" value="EFG_IV"/>
</dbReference>
<dbReference type="InterPro" id="IPR000640">
    <property type="entry name" value="EFG_V-like"/>
</dbReference>
<dbReference type="InterPro" id="IPR004161">
    <property type="entry name" value="EFTu-like_2"/>
</dbReference>
<dbReference type="InterPro" id="IPR031157">
    <property type="entry name" value="G_TR_CS"/>
</dbReference>
<dbReference type="InterPro" id="IPR027417">
    <property type="entry name" value="P-loop_NTPase"/>
</dbReference>
<dbReference type="InterPro" id="IPR020568">
    <property type="entry name" value="Ribosomal_Su5_D2-typ_SF"/>
</dbReference>
<dbReference type="InterPro" id="IPR014721">
    <property type="entry name" value="Ribsml_uS5_D2-typ_fold_subgr"/>
</dbReference>
<dbReference type="InterPro" id="IPR005225">
    <property type="entry name" value="Small_GTP-bd"/>
</dbReference>
<dbReference type="InterPro" id="IPR000795">
    <property type="entry name" value="T_Tr_GTP-bd_dom"/>
</dbReference>
<dbReference type="InterPro" id="IPR009000">
    <property type="entry name" value="Transl_B-barrel_sf"/>
</dbReference>
<dbReference type="InterPro" id="IPR004540">
    <property type="entry name" value="Transl_elong_EFG/EF2"/>
</dbReference>
<dbReference type="InterPro" id="IPR005517">
    <property type="entry name" value="Transl_elong_EFG/EF2_IV"/>
</dbReference>
<dbReference type="NCBIfam" id="TIGR00484">
    <property type="entry name" value="EF-G"/>
    <property type="match status" value="1"/>
</dbReference>
<dbReference type="NCBIfam" id="NF009381">
    <property type="entry name" value="PRK12740.1-5"/>
    <property type="match status" value="1"/>
</dbReference>
<dbReference type="NCBIfam" id="TIGR00231">
    <property type="entry name" value="small_GTP"/>
    <property type="match status" value="1"/>
</dbReference>
<dbReference type="PANTHER" id="PTHR43636">
    <property type="entry name" value="ELONGATION FACTOR G, MITOCHONDRIAL"/>
    <property type="match status" value="1"/>
</dbReference>
<dbReference type="PANTHER" id="PTHR43636:SF2">
    <property type="entry name" value="ELONGATION FACTOR G, MITOCHONDRIAL"/>
    <property type="match status" value="1"/>
</dbReference>
<dbReference type="Pfam" id="PF00679">
    <property type="entry name" value="EFG_C"/>
    <property type="match status" value="1"/>
</dbReference>
<dbReference type="Pfam" id="PF14492">
    <property type="entry name" value="EFG_III"/>
    <property type="match status" value="1"/>
</dbReference>
<dbReference type="Pfam" id="PF03764">
    <property type="entry name" value="EFG_IV"/>
    <property type="match status" value="1"/>
</dbReference>
<dbReference type="Pfam" id="PF00009">
    <property type="entry name" value="GTP_EFTU"/>
    <property type="match status" value="1"/>
</dbReference>
<dbReference type="Pfam" id="PF03144">
    <property type="entry name" value="GTP_EFTU_D2"/>
    <property type="match status" value="1"/>
</dbReference>
<dbReference type="PRINTS" id="PR00315">
    <property type="entry name" value="ELONGATNFCT"/>
</dbReference>
<dbReference type="SMART" id="SM00838">
    <property type="entry name" value="EFG_C"/>
    <property type="match status" value="1"/>
</dbReference>
<dbReference type="SMART" id="SM00889">
    <property type="entry name" value="EFG_IV"/>
    <property type="match status" value="1"/>
</dbReference>
<dbReference type="SUPFAM" id="SSF54980">
    <property type="entry name" value="EF-G C-terminal domain-like"/>
    <property type="match status" value="2"/>
</dbReference>
<dbReference type="SUPFAM" id="SSF52540">
    <property type="entry name" value="P-loop containing nucleoside triphosphate hydrolases"/>
    <property type="match status" value="1"/>
</dbReference>
<dbReference type="SUPFAM" id="SSF54211">
    <property type="entry name" value="Ribosomal protein S5 domain 2-like"/>
    <property type="match status" value="1"/>
</dbReference>
<dbReference type="SUPFAM" id="SSF50447">
    <property type="entry name" value="Translation proteins"/>
    <property type="match status" value="1"/>
</dbReference>
<dbReference type="PROSITE" id="PS00301">
    <property type="entry name" value="G_TR_1"/>
    <property type="match status" value="1"/>
</dbReference>
<dbReference type="PROSITE" id="PS51722">
    <property type="entry name" value="G_TR_2"/>
    <property type="match status" value="1"/>
</dbReference>
<reference key="1">
    <citation type="journal article" date="2008" name="PLoS Genet.">
        <title>Genomic islands in the pathogenic filamentous fungus Aspergillus fumigatus.</title>
        <authorList>
            <person name="Fedorova N.D."/>
            <person name="Khaldi N."/>
            <person name="Joardar V.S."/>
            <person name="Maiti R."/>
            <person name="Amedeo P."/>
            <person name="Anderson M.J."/>
            <person name="Crabtree J."/>
            <person name="Silva J.C."/>
            <person name="Badger J.H."/>
            <person name="Albarraq A."/>
            <person name="Angiuoli S."/>
            <person name="Bussey H."/>
            <person name="Bowyer P."/>
            <person name="Cotty P.J."/>
            <person name="Dyer P.S."/>
            <person name="Egan A."/>
            <person name="Galens K."/>
            <person name="Fraser-Liggett C.M."/>
            <person name="Haas B.J."/>
            <person name="Inman J.M."/>
            <person name="Kent R."/>
            <person name="Lemieux S."/>
            <person name="Malavazi I."/>
            <person name="Orvis J."/>
            <person name="Roemer T."/>
            <person name="Ronning C.M."/>
            <person name="Sundaram J.P."/>
            <person name="Sutton G."/>
            <person name="Turner G."/>
            <person name="Venter J.C."/>
            <person name="White O.R."/>
            <person name="Whitty B.R."/>
            <person name="Youngman P."/>
            <person name="Wolfe K.H."/>
            <person name="Goldman G.H."/>
            <person name="Wortman J.R."/>
            <person name="Jiang B."/>
            <person name="Denning D.W."/>
            <person name="Nierman W.C."/>
        </authorList>
    </citation>
    <scope>NUCLEOTIDE SEQUENCE [LARGE SCALE GENOMIC DNA]</scope>
    <source>
        <strain>ATCC 1007 / CBS 513.65 / DSM 816 / NCTC 3887 / NRRL 1 / QM 1276 / 107</strain>
    </source>
</reference>
<keyword id="KW-0251">Elongation factor</keyword>
<keyword id="KW-0342">GTP-binding</keyword>
<keyword id="KW-0496">Mitochondrion</keyword>
<keyword id="KW-0547">Nucleotide-binding</keyword>
<keyword id="KW-0648">Protein biosynthesis</keyword>
<keyword id="KW-1185">Reference proteome</keyword>
<keyword id="KW-0809">Transit peptide</keyword>
<gene>
    <name type="primary">mef1</name>
    <name type="ORF">ACLA_047470</name>
</gene>
<proteinExistence type="inferred from homology"/>
<comment type="function">
    <text evidence="1">Mitochondrial GTPase that catalyzes the GTP-dependent ribosomal translocation step during translation elongation. During this step, the ribosome changes from the pre-translocational (PRE) to the post-translocational (POST) state as the newly formed A-site-bound peptidyl-tRNA and P-site-bound deacylated tRNA move to the P and E sites, respectively. Catalyzes the coordinated movement of the two tRNA molecules, the mRNA and conformational changes in the ribosome.</text>
</comment>
<comment type="pathway">
    <text evidence="1">Protein biosynthesis; polypeptide chain elongation.</text>
</comment>
<comment type="subcellular location">
    <subcellularLocation>
        <location evidence="1">Mitochondrion</location>
    </subcellularLocation>
</comment>
<comment type="similarity">
    <text evidence="2">Belongs to the TRAFAC class translation factor GTPase superfamily. Classic translation factor GTPase family. EF-G/EF-2 subfamily.</text>
</comment>
<feature type="transit peptide" description="Mitochondrion" evidence="1">
    <location>
        <begin position="1"/>
        <end position="24"/>
    </location>
</feature>
<feature type="chain" id="PRO_0000385556" description="Elongation factor G, mitochondrial">
    <location>
        <begin position="25"/>
        <end position="801"/>
    </location>
</feature>
<feature type="domain" description="tr-type G">
    <location>
        <begin position="99"/>
        <end position="386"/>
    </location>
</feature>
<feature type="binding site" evidence="1">
    <location>
        <begin position="108"/>
        <end position="115"/>
    </location>
    <ligand>
        <name>GTP</name>
        <dbReference type="ChEBI" id="CHEBI:37565"/>
    </ligand>
</feature>
<feature type="binding site" evidence="1">
    <location>
        <begin position="184"/>
        <end position="188"/>
    </location>
    <ligand>
        <name>GTP</name>
        <dbReference type="ChEBI" id="CHEBI:37565"/>
    </ligand>
</feature>
<feature type="binding site" evidence="1">
    <location>
        <begin position="238"/>
        <end position="241"/>
    </location>
    <ligand>
        <name>GTP</name>
        <dbReference type="ChEBI" id="CHEBI:37565"/>
    </ligand>
</feature>
<organism>
    <name type="scientific">Aspergillus clavatus (strain ATCC 1007 / CBS 513.65 / DSM 816 / NCTC 3887 / NRRL 1 / QM 1276 / 107)</name>
    <dbReference type="NCBI Taxonomy" id="344612"/>
    <lineage>
        <taxon>Eukaryota</taxon>
        <taxon>Fungi</taxon>
        <taxon>Dikarya</taxon>
        <taxon>Ascomycota</taxon>
        <taxon>Pezizomycotina</taxon>
        <taxon>Eurotiomycetes</taxon>
        <taxon>Eurotiomycetidae</taxon>
        <taxon>Eurotiales</taxon>
        <taxon>Aspergillaceae</taxon>
        <taxon>Aspergillus</taxon>
        <taxon>Aspergillus subgen. Fumigati</taxon>
    </lineage>
</organism>
<protein>
    <recommendedName>
        <fullName evidence="1">Elongation factor G, mitochondrial</fullName>
        <shortName evidence="1">EF-Gmt</shortName>
    </recommendedName>
    <alternativeName>
        <fullName evidence="1">Elongation factor G 1, mitochondrial</fullName>
        <shortName evidence="1">mEF-G 1</shortName>
    </alternativeName>
    <alternativeName>
        <fullName evidence="1">Elongation factor G1</fullName>
    </alternativeName>
</protein>
<name>EFGM_ASPCL</name>
<accession>A1CHC3</accession>